<sequence>MTVVEIKSQDQFTQLTTTNAANKLIVLYFKAQWADPCKTMSQVLEAVSEKVRQEDVRFLSIDADEHPEISDLFEIAAVPYFVFIQNGTIVKEISAADPKEFVKSLEILSNASASLANNAKGPKSTSDEESSGSSDDEEDETEEEINARLVKLVQAAPVMLFMKGSPSEPKCGFSRQLVGILREHQIRFGFFDILRDENVRQSLKKFSDWPTFPQLYINGEFQGGLDIIKESIEEDPEYFQHALQ</sequence>
<proteinExistence type="evidence at protein level"/>
<feature type="chain" id="PRO_0000102250" description="Monothiol glutaredoxin-4">
    <location>
        <begin position="1"/>
        <end position="244"/>
    </location>
</feature>
<feature type="domain" description="Thioredoxin" evidence="3">
    <location>
        <begin position="3"/>
        <end position="110"/>
    </location>
</feature>
<feature type="domain" description="Glutaredoxin" evidence="2">
    <location>
        <begin position="146"/>
        <end position="244"/>
    </location>
</feature>
<feature type="region of interest" description="Disordered" evidence="4">
    <location>
        <begin position="116"/>
        <end position="143"/>
    </location>
</feature>
<feature type="compositionally biased region" description="Acidic residues" evidence="4">
    <location>
        <begin position="127"/>
        <end position="143"/>
    </location>
</feature>
<feature type="binding site" evidence="1">
    <location>
        <position position="163"/>
    </location>
    <ligand>
        <name>glutathione</name>
        <dbReference type="ChEBI" id="CHEBI:57925"/>
    </ligand>
</feature>
<feature type="binding site" evidence="1">
    <location>
        <position position="171"/>
    </location>
    <ligand>
        <name>[2Fe-2S] cluster</name>
        <dbReference type="ChEBI" id="CHEBI:190135"/>
        <note>ligand shared between dimeric partners</note>
    </ligand>
</feature>
<feature type="binding site" evidence="1">
    <location>
        <position position="200"/>
    </location>
    <ligand>
        <name>glutathione</name>
        <dbReference type="ChEBI" id="CHEBI:57925"/>
    </ligand>
</feature>
<feature type="binding site" evidence="1">
    <location>
        <position position="212"/>
    </location>
    <ligand>
        <name>glutathione</name>
        <dbReference type="ChEBI" id="CHEBI:57925"/>
    </ligand>
</feature>
<feature type="binding site" evidence="1">
    <location>
        <begin position="225"/>
        <end position="226"/>
    </location>
    <ligand>
        <name>glutathione</name>
        <dbReference type="ChEBI" id="CHEBI:57925"/>
    </ligand>
</feature>
<evidence type="ECO:0000250" key="1"/>
<evidence type="ECO:0000255" key="2">
    <source>
        <dbReference type="PROSITE-ProRule" id="PRU00686"/>
    </source>
</evidence>
<evidence type="ECO:0000255" key="3">
    <source>
        <dbReference type="PROSITE-ProRule" id="PRU00691"/>
    </source>
</evidence>
<evidence type="ECO:0000256" key="4">
    <source>
        <dbReference type="SAM" id="MobiDB-lite"/>
    </source>
</evidence>
<evidence type="ECO:0000269" key="5">
    <source>
    </source>
</evidence>
<evidence type="ECO:0000269" key="6">
    <source>
    </source>
</evidence>
<evidence type="ECO:0000305" key="7"/>
<reference key="1">
    <citation type="journal article" date="1997" name="Nature">
        <title>The nucleotide sequence of Saccharomyces cerevisiae chromosome V.</title>
        <authorList>
            <person name="Dietrich F.S."/>
            <person name="Mulligan J.T."/>
            <person name="Hennessy K.M."/>
            <person name="Yelton M.A."/>
            <person name="Allen E."/>
            <person name="Araujo R."/>
            <person name="Aviles E."/>
            <person name="Berno A."/>
            <person name="Brennan T."/>
            <person name="Carpenter J."/>
            <person name="Chen E."/>
            <person name="Cherry J.M."/>
            <person name="Chung E."/>
            <person name="Duncan M."/>
            <person name="Guzman E."/>
            <person name="Hartzell G."/>
            <person name="Hunicke-Smith S."/>
            <person name="Hyman R.W."/>
            <person name="Kayser A."/>
            <person name="Komp C."/>
            <person name="Lashkari D."/>
            <person name="Lew H."/>
            <person name="Lin D."/>
            <person name="Mosedale D."/>
            <person name="Nakahara K."/>
            <person name="Namath A."/>
            <person name="Norgren R."/>
            <person name="Oefner P."/>
            <person name="Oh C."/>
            <person name="Petel F.X."/>
            <person name="Roberts D."/>
            <person name="Sehl P."/>
            <person name="Schramm S."/>
            <person name="Shogren T."/>
            <person name="Smith V."/>
            <person name="Taylor P."/>
            <person name="Wei Y."/>
            <person name="Botstein D."/>
            <person name="Davis R.W."/>
        </authorList>
    </citation>
    <scope>NUCLEOTIDE SEQUENCE [LARGE SCALE GENOMIC DNA]</scope>
    <source>
        <strain>ATCC 204508 / S288c</strain>
    </source>
</reference>
<reference key="2">
    <citation type="journal article" date="2014" name="G3 (Bethesda)">
        <title>The reference genome sequence of Saccharomyces cerevisiae: Then and now.</title>
        <authorList>
            <person name="Engel S.R."/>
            <person name="Dietrich F.S."/>
            <person name="Fisk D.G."/>
            <person name="Binkley G."/>
            <person name="Balakrishnan R."/>
            <person name="Costanzo M.C."/>
            <person name="Dwight S.S."/>
            <person name="Hitz B.C."/>
            <person name="Karra K."/>
            <person name="Nash R.S."/>
            <person name="Weng S."/>
            <person name="Wong E.D."/>
            <person name="Lloyd P."/>
            <person name="Skrzypek M.S."/>
            <person name="Miyasato S.R."/>
            <person name="Simison M."/>
            <person name="Cherry J.M."/>
        </authorList>
    </citation>
    <scope>GENOME REANNOTATION</scope>
    <source>
        <strain>ATCC 204508 / S288c</strain>
    </source>
</reference>
<reference key="3">
    <citation type="journal article" date="2003" name="Nature">
        <title>Global analysis of protein expression in yeast.</title>
        <authorList>
            <person name="Ghaemmaghami S."/>
            <person name="Huh W.-K."/>
            <person name="Bower K."/>
            <person name="Howson R.W."/>
            <person name="Belle A."/>
            <person name="Dephoure N."/>
            <person name="O'Shea E.K."/>
            <person name="Weissman J.S."/>
        </authorList>
    </citation>
    <scope>LEVEL OF PROTEIN EXPRESSION [LARGE SCALE ANALYSIS]</scope>
</reference>
<reference key="4">
    <citation type="journal article" date="2008" name="J. Biol. Chem.">
        <title>Identification of FRA1 and FRA2 as genes involved in regulating the yeast iron regulon in response to decreased mitochondrial iron-sulfur cluster synthesis.</title>
        <authorList>
            <person name="Kumanovics A."/>
            <person name="Chen O.S."/>
            <person name="Li L."/>
            <person name="Bagley D."/>
            <person name="Adkins E.M."/>
            <person name="Lin H."/>
            <person name="Dingra N.N."/>
            <person name="Outten C.E."/>
            <person name="Keller G."/>
            <person name="Winge D."/>
            <person name="Ward D.M."/>
            <person name="Kaplan J."/>
        </authorList>
    </citation>
    <scope>INTERACTION WITH FRA2</scope>
</reference>
<reference key="5">
    <citation type="journal article" date="2009" name="Biochemistry">
        <title>The yeast iron regulatory proteins Grx3/4 and Fra2 form heterodimeric complexes containing a [2Fe-2S] cluster with cysteinyl and histidyl ligation.</title>
        <authorList>
            <person name="Li H."/>
            <person name="Mapolelo D.T."/>
            <person name="Dingra N.N."/>
            <person name="Naik S.G."/>
            <person name="Lees N.S."/>
            <person name="Hoffman B.M."/>
            <person name="Riggs-Gelasco P.J."/>
            <person name="Huynh B.H."/>
            <person name="Johnson M.K."/>
            <person name="Outten C.E."/>
        </authorList>
    </citation>
    <scope>FUNCTION</scope>
    <scope>SUBUNIT</scope>
    <scope>IDENTIFICATION BY MASS SPECTROMETRY</scope>
    <scope>INTERACTION WITH FRA2</scope>
</reference>
<keyword id="KW-0001">2Fe-2S</keyword>
<keyword id="KW-0408">Iron</keyword>
<keyword id="KW-0411">Iron-sulfur</keyword>
<keyword id="KW-0479">Metal-binding</keyword>
<keyword id="KW-0676">Redox-active center</keyword>
<keyword id="KW-1185">Reference proteome</keyword>
<protein>
    <recommendedName>
        <fullName>Monothiol glutaredoxin-4</fullName>
    </recommendedName>
</protein>
<name>GLRX4_YEAST</name>
<gene>
    <name type="primary">GRX4</name>
    <name type="ordered locus">YER174C</name>
    <name type="ORF">SYGP-ORF64</name>
</gene>
<organism>
    <name type="scientific">Saccharomyces cerevisiae (strain ATCC 204508 / S288c)</name>
    <name type="common">Baker's yeast</name>
    <dbReference type="NCBI Taxonomy" id="559292"/>
    <lineage>
        <taxon>Eukaryota</taxon>
        <taxon>Fungi</taxon>
        <taxon>Dikarya</taxon>
        <taxon>Ascomycota</taxon>
        <taxon>Saccharomycotina</taxon>
        <taxon>Saccharomycetes</taxon>
        <taxon>Saccharomycetales</taxon>
        <taxon>Saccharomycetaceae</taxon>
        <taxon>Saccharomyces</taxon>
    </lineage>
</organism>
<accession>P32642</accession>
<accession>D3DM82</accession>
<dbReference type="EMBL" id="U18922">
    <property type="protein sequence ID" value="AAB64701.1"/>
    <property type="molecule type" value="Genomic_DNA"/>
</dbReference>
<dbReference type="EMBL" id="BK006939">
    <property type="protein sequence ID" value="DAA07836.1"/>
    <property type="molecule type" value="Genomic_DNA"/>
</dbReference>
<dbReference type="PIR" id="S30860">
    <property type="entry name" value="S30860"/>
</dbReference>
<dbReference type="RefSeq" id="NP_011101.3">
    <property type="nucleotide sequence ID" value="NM_001179064.3"/>
</dbReference>
<dbReference type="SMR" id="P32642"/>
<dbReference type="BioGRID" id="36927">
    <property type="interactions" value="125"/>
</dbReference>
<dbReference type="ComplexPortal" id="CPX-6865">
    <property type="entry name" value="BOL2-GRX4 iron-sulfur cluster assembly complex"/>
</dbReference>
<dbReference type="ComplexPortal" id="CPX-6921">
    <property type="entry name" value="GRX4 iron-sulfur cluster assembly homodimer complex"/>
</dbReference>
<dbReference type="DIP" id="DIP-6635N"/>
<dbReference type="FunCoup" id="P32642">
    <property type="interactions" value="821"/>
</dbReference>
<dbReference type="IntAct" id="P32642">
    <property type="interactions" value="16"/>
</dbReference>
<dbReference type="MINT" id="P32642"/>
<dbReference type="STRING" id="4932.YER174C"/>
<dbReference type="iPTMnet" id="P32642"/>
<dbReference type="PaxDb" id="4932-YER174C"/>
<dbReference type="PeptideAtlas" id="P32642"/>
<dbReference type="EnsemblFungi" id="YER174C_mRNA">
    <property type="protein sequence ID" value="YER174C"/>
    <property type="gene ID" value="YER174C"/>
</dbReference>
<dbReference type="GeneID" id="856921"/>
<dbReference type="KEGG" id="sce:YER174C"/>
<dbReference type="AGR" id="SGD:S000000976"/>
<dbReference type="SGD" id="S000000976">
    <property type="gene designation" value="GRX4"/>
</dbReference>
<dbReference type="VEuPathDB" id="FungiDB:YER174C"/>
<dbReference type="eggNOG" id="KOG0911">
    <property type="taxonomic scope" value="Eukaryota"/>
</dbReference>
<dbReference type="GeneTree" id="ENSGT00550000075030"/>
<dbReference type="HOGENOM" id="CLU_026126_12_0_1"/>
<dbReference type="InParanoid" id="P32642"/>
<dbReference type="OMA" id="WAEPCKT"/>
<dbReference type="OrthoDB" id="415696at2759"/>
<dbReference type="BioCyc" id="YEAST:G3O-30334-MONOMER"/>
<dbReference type="BioGRID-ORCS" id="856921">
    <property type="hits" value="0 hits in 10 CRISPR screens"/>
</dbReference>
<dbReference type="PRO" id="PR:P32642"/>
<dbReference type="Proteomes" id="UP000002311">
    <property type="component" value="Chromosome V"/>
</dbReference>
<dbReference type="RNAct" id="P32642">
    <property type="molecule type" value="protein"/>
</dbReference>
<dbReference type="GO" id="GO:0005737">
    <property type="term" value="C:cytoplasm"/>
    <property type="evidence" value="ECO:0000303"/>
    <property type="project" value="ComplexPortal"/>
</dbReference>
<dbReference type="GO" id="GO:0005829">
    <property type="term" value="C:cytosol"/>
    <property type="evidence" value="ECO:0000318"/>
    <property type="project" value="GO_Central"/>
</dbReference>
<dbReference type="GO" id="GO:1990229">
    <property type="term" value="C:iron-sulfur cluster assembly complex"/>
    <property type="evidence" value="ECO:0000353"/>
    <property type="project" value="ComplexPortal"/>
</dbReference>
<dbReference type="GO" id="GO:0005634">
    <property type="term" value="C:nucleus"/>
    <property type="evidence" value="ECO:0000314"/>
    <property type="project" value="SGD"/>
</dbReference>
<dbReference type="GO" id="GO:0051537">
    <property type="term" value="F:2 iron, 2 sulfur cluster binding"/>
    <property type="evidence" value="ECO:0000318"/>
    <property type="project" value="GO_Central"/>
</dbReference>
<dbReference type="GO" id="GO:0015036">
    <property type="term" value="F:disulfide oxidoreductase activity"/>
    <property type="evidence" value="ECO:0000315"/>
    <property type="project" value="SGD"/>
</dbReference>
<dbReference type="GO" id="GO:0004364">
    <property type="term" value="F:glutathione transferase activity"/>
    <property type="evidence" value="ECO:0000314"/>
    <property type="project" value="SGD"/>
</dbReference>
<dbReference type="GO" id="GO:0046872">
    <property type="term" value="F:metal ion binding"/>
    <property type="evidence" value="ECO:0007669"/>
    <property type="project" value="UniProtKB-KW"/>
</dbReference>
<dbReference type="GO" id="GO:0061629">
    <property type="term" value="F:RNA polymerase II-specific DNA-binding transcription factor binding"/>
    <property type="evidence" value="ECO:0000353"/>
    <property type="project" value="SGD"/>
</dbReference>
<dbReference type="GO" id="GO:0030036">
    <property type="term" value="P:actin cytoskeleton organization"/>
    <property type="evidence" value="ECO:0000315"/>
    <property type="project" value="SGD"/>
</dbReference>
<dbReference type="GO" id="GO:0034599">
    <property type="term" value="P:cellular response to oxidative stress"/>
    <property type="evidence" value="ECO:0000315"/>
    <property type="project" value="SGD"/>
</dbReference>
<dbReference type="GO" id="GO:0006879">
    <property type="term" value="P:intracellular iron ion homeostasis"/>
    <property type="evidence" value="ECO:0000316"/>
    <property type="project" value="SGD"/>
</dbReference>
<dbReference type="GO" id="GO:0016226">
    <property type="term" value="P:iron-sulfur cluster assembly"/>
    <property type="evidence" value="ECO:0000303"/>
    <property type="project" value="ComplexPortal"/>
</dbReference>
<dbReference type="CDD" id="cd03028">
    <property type="entry name" value="GRX_PICOT_like"/>
    <property type="match status" value="1"/>
</dbReference>
<dbReference type="CDD" id="cd02984">
    <property type="entry name" value="TRX_PICOT"/>
    <property type="match status" value="1"/>
</dbReference>
<dbReference type="FunFam" id="3.40.30.10:FF:000012">
    <property type="entry name" value="Monothiol glutaredoxin"/>
    <property type="match status" value="1"/>
</dbReference>
<dbReference type="FunFam" id="3.40.30.10:FF:000092">
    <property type="entry name" value="Monothiol glutaredoxin"/>
    <property type="match status" value="1"/>
</dbReference>
<dbReference type="Gene3D" id="3.40.30.10">
    <property type="entry name" value="Glutaredoxin"/>
    <property type="match status" value="2"/>
</dbReference>
<dbReference type="InterPro" id="IPR002109">
    <property type="entry name" value="Glutaredoxin"/>
</dbReference>
<dbReference type="InterPro" id="IPR033658">
    <property type="entry name" value="GRX_PICOT-like"/>
</dbReference>
<dbReference type="InterPro" id="IPR004480">
    <property type="entry name" value="Monothiol_GRX-rel"/>
</dbReference>
<dbReference type="InterPro" id="IPR036249">
    <property type="entry name" value="Thioredoxin-like_sf"/>
</dbReference>
<dbReference type="InterPro" id="IPR013766">
    <property type="entry name" value="Thioredoxin_domain"/>
</dbReference>
<dbReference type="PANTHER" id="PTHR10293">
    <property type="entry name" value="GLUTAREDOXIN FAMILY MEMBER"/>
    <property type="match status" value="1"/>
</dbReference>
<dbReference type="PANTHER" id="PTHR10293:SF73">
    <property type="entry name" value="GLUTAREDOXIN-3"/>
    <property type="match status" value="1"/>
</dbReference>
<dbReference type="Pfam" id="PF00462">
    <property type="entry name" value="Glutaredoxin"/>
    <property type="match status" value="1"/>
</dbReference>
<dbReference type="Pfam" id="PF00085">
    <property type="entry name" value="Thioredoxin"/>
    <property type="match status" value="1"/>
</dbReference>
<dbReference type="SUPFAM" id="SSF52833">
    <property type="entry name" value="Thioredoxin-like"/>
    <property type="match status" value="2"/>
</dbReference>
<dbReference type="PROSITE" id="PS51354">
    <property type="entry name" value="GLUTAREDOXIN_2"/>
    <property type="match status" value="1"/>
</dbReference>
<dbReference type="PROSITE" id="PS51352">
    <property type="entry name" value="THIOREDOXIN_2"/>
    <property type="match status" value="1"/>
</dbReference>
<comment type="function">
    <text evidence="1 6 7">Monothiol glutaredoxin involved in the biogenesis of iron-sulfur clusters (By similarity). Binds one iron-sulfur cluster per dimer. The iron-sulfur cluster is bound between subunits, and is complexed by a bound glutathione and a cysteine residue from each subunit (Probable).</text>
</comment>
<comment type="subunit">
    <text evidence="6">Homodimer. Heterodimer with FRA2.</text>
</comment>
<comment type="interaction">
    <interactant intactId="EBI-22211">
        <id>P32642</id>
    </interactant>
    <interactant intactId="EBI-2332">
        <id>P22149</id>
        <label>AFT1</label>
    </interactant>
    <organismsDiffer>false</organismsDiffer>
    <experiments>3</experiments>
</comment>
<comment type="interaction">
    <interactant intactId="EBI-22211">
        <id>P32642</id>
    </interactant>
    <interactant intactId="EBI-3809">
        <id>P53323</id>
        <label>BUD32</label>
    </interactant>
    <organismsDiffer>false</organismsDiffer>
    <experiments>11</experiments>
</comment>
<comment type="miscellaneous">
    <text evidence="5">Present with 7800 molecules/cell in log phase SD medium.</text>
</comment>
<comment type="similarity">
    <text evidence="7">Belongs to the glutaredoxin family. Monothiol subfamily.</text>
</comment>